<dbReference type="EC" id="3.6.1.23" evidence="1"/>
<dbReference type="EMBL" id="CP000096">
    <property type="protein sequence ID" value="ABB24277.1"/>
    <property type="molecule type" value="Genomic_DNA"/>
</dbReference>
<dbReference type="RefSeq" id="WP_011358149.1">
    <property type="nucleotide sequence ID" value="NC_007512.1"/>
</dbReference>
<dbReference type="SMR" id="Q3B304"/>
<dbReference type="STRING" id="319225.Plut_1418"/>
<dbReference type="KEGG" id="plt:Plut_1418"/>
<dbReference type="eggNOG" id="COG0756">
    <property type="taxonomic scope" value="Bacteria"/>
</dbReference>
<dbReference type="HOGENOM" id="CLU_068508_1_2_10"/>
<dbReference type="OrthoDB" id="9809956at2"/>
<dbReference type="UniPathway" id="UPA00610">
    <property type="reaction ID" value="UER00666"/>
</dbReference>
<dbReference type="Proteomes" id="UP000002709">
    <property type="component" value="Chromosome"/>
</dbReference>
<dbReference type="GO" id="GO:0004170">
    <property type="term" value="F:dUTP diphosphatase activity"/>
    <property type="evidence" value="ECO:0007669"/>
    <property type="project" value="UniProtKB-UniRule"/>
</dbReference>
<dbReference type="GO" id="GO:0000287">
    <property type="term" value="F:magnesium ion binding"/>
    <property type="evidence" value="ECO:0007669"/>
    <property type="project" value="UniProtKB-UniRule"/>
</dbReference>
<dbReference type="GO" id="GO:0006226">
    <property type="term" value="P:dUMP biosynthetic process"/>
    <property type="evidence" value="ECO:0007669"/>
    <property type="project" value="UniProtKB-UniRule"/>
</dbReference>
<dbReference type="GO" id="GO:0046081">
    <property type="term" value="P:dUTP catabolic process"/>
    <property type="evidence" value="ECO:0007669"/>
    <property type="project" value="InterPro"/>
</dbReference>
<dbReference type="CDD" id="cd07557">
    <property type="entry name" value="trimeric_dUTPase"/>
    <property type="match status" value="1"/>
</dbReference>
<dbReference type="FunFam" id="2.70.40.10:FF:000002">
    <property type="entry name" value="dUTP diphosphatase"/>
    <property type="match status" value="1"/>
</dbReference>
<dbReference type="Gene3D" id="2.70.40.10">
    <property type="match status" value="1"/>
</dbReference>
<dbReference type="HAMAP" id="MF_00116">
    <property type="entry name" value="dUTPase_bact"/>
    <property type="match status" value="1"/>
</dbReference>
<dbReference type="InterPro" id="IPR008181">
    <property type="entry name" value="dUTPase"/>
</dbReference>
<dbReference type="InterPro" id="IPR029054">
    <property type="entry name" value="dUTPase-like"/>
</dbReference>
<dbReference type="InterPro" id="IPR036157">
    <property type="entry name" value="dUTPase-like_sf"/>
</dbReference>
<dbReference type="InterPro" id="IPR033704">
    <property type="entry name" value="dUTPase_trimeric"/>
</dbReference>
<dbReference type="NCBIfam" id="TIGR00576">
    <property type="entry name" value="dut"/>
    <property type="match status" value="1"/>
</dbReference>
<dbReference type="NCBIfam" id="NF001862">
    <property type="entry name" value="PRK00601.1"/>
    <property type="match status" value="1"/>
</dbReference>
<dbReference type="PANTHER" id="PTHR11241">
    <property type="entry name" value="DEOXYURIDINE 5'-TRIPHOSPHATE NUCLEOTIDOHYDROLASE"/>
    <property type="match status" value="1"/>
</dbReference>
<dbReference type="PANTHER" id="PTHR11241:SF0">
    <property type="entry name" value="DEOXYURIDINE 5'-TRIPHOSPHATE NUCLEOTIDOHYDROLASE"/>
    <property type="match status" value="1"/>
</dbReference>
<dbReference type="Pfam" id="PF00692">
    <property type="entry name" value="dUTPase"/>
    <property type="match status" value="1"/>
</dbReference>
<dbReference type="SUPFAM" id="SSF51283">
    <property type="entry name" value="dUTPase-like"/>
    <property type="match status" value="1"/>
</dbReference>
<evidence type="ECO:0000255" key="1">
    <source>
        <dbReference type="HAMAP-Rule" id="MF_00116"/>
    </source>
</evidence>
<protein>
    <recommendedName>
        <fullName evidence="1">Deoxyuridine 5'-triphosphate nucleotidohydrolase</fullName>
        <shortName evidence="1">dUTPase</shortName>
        <ecNumber evidence="1">3.6.1.23</ecNumber>
    </recommendedName>
    <alternativeName>
        <fullName evidence="1">dUTP pyrophosphatase</fullName>
    </alternativeName>
</protein>
<sequence length="148" mass="15774">MLKVKIVRLNKQAFLPVYATRHAAGMDVSACLEAPVVVAPGSAELIATGLAIELPEGYEAQLRPRSGLALRNLISLPNSPATIDADYRGEVKVILVNHGRDPFKVSHGDRIAQMVVARVEQVSFVEVDTLGDTERGEGGFGHTGMGQG</sequence>
<name>DUT_CHLL3</name>
<comment type="function">
    <text evidence="1">This enzyme is involved in nucleotide metabolism: it produces dUMP, the immediate precursor of thymidine nucleotides and it decreases the intracellular concentration of dUTP so that uracil cannot be incorporated into DNA.</text>
</comment>
<comment type="catalytic activity">
    <reaction evidence="1">
        <text>dUTP + H2O = dUMP + diphosphate + H(+)</text>
        <dbReference type="Rhea" id="RHEA:10248"/>
        <dbReference type="ChEBI" id="CHEBI:15377"/>
        <dbReference type="ChEBI" id="CHEBI:15378"/>
        <dbReference type="ChEBI" id="CHEBI:33019"/>
        <dbReference type="ChEBI" id="CHEBI:61555"/>
        <dbReference type="ChEBI" id="CHEBI:246422"/>
        <dbReference type="EC" id="3.6.1.23"/>
    </reaction>
</comment>
<comment type="cofactor">
    <cofactor evidence="1">
        <name>Mg(2+)</name>
        <dbReference type="ChEBI" id="CHEBI:18420"/>
    </cofactor>
</comment>
<comment type="pathway">
    <text evidence="1">Pyrimidine metabolism; dUMP biosynthesis; dUMP from dCTP (dUTP route): step 2/2.</text>
</comment>
<comment type="similarity">
    <text evidence="1">Belongs to the dUTPase family.</text>
</comment>
<reference key="1">
    <citation type="submission" date="2005-08" db="EMBL/GenBank/DDBJ databases">
        <title>Complete sequence of Pelodictyon luteolum DSM 273.</title>
        <authorList>
            <consortium name="US DOE Joint Genome Institute"/>
            <person name="Copeland A."/>
            <person name="Lucas S."/>
            <person name="Lapidus A."/>
            <person name="Barry K."/>
            <person name="Detter J.C."/>
            <person name="Glavina T."/>
            <person name="Hammon N."/>
            <person name="Israni S."/>
            <person name="Pitluck S."/>
            <person name="Bryant D."/>
            <person name="Schmutz J."/>
            <person name="Larimer F."/>
            <person name="Land M."/>
            <person name="Kyrpides N."/>
            <person name="Ivanova N."/>
            <person name="Richardson P."/>
        </authorList>
    </citation>
    <scope>NUCLEOTIDE SEQUENCE [LARGE SCALE GENOMIC DNA]</scope>
    <source>
        <strain>DSM 273 / BCRC 81028 / 2530</strain>
    </source>
</reference>
<proteinExistence type="inferred from homology"/>
<accession>Q3B304</accession>
<organism>
    <name type="scientific">Chlorobium luteolum (strain DSM 273 / BCRC 81028 / 2530)</name>
    <name type="common">Pelodictyon luteolum</name>
    <dbReference type="NCBI Taxonomy" id="319225"/>
    <lineage>
        <taxon>Bacteria</taxon>
        <taxon>Pseudomonadati</taxon>
        <taxon>Chlorobiota</taxon>
        <taxon>Chlorobiia</taxon>
        <taxon>Chlorobiales</taxon>
        <taxon>Chlorobiaceae</taxon>
        <taxon>Chlorobium/Pelodictyon group</taxon>
        <taxon>Pelodictyon</taxon>
    </lineage>
</organism>
<gene>
    <name evidence="1" type="primary">dut</name>
    <name type="ordered locus">Plut_1418</name>
</gene>
<feature type="chain" id="PRO_0000231418" description="Deoxyuridine 5'-triphosphate nucleotidohydrolase">
    <location>
        <begin position="1"/>
        <end position="148"/>
    </location>
</feature>
<feature type="binding site" evidence="1">
    <location>
        <begin position="65"/>
        <end position="67"/>
    </location>
    <ligand>
        <name>substrate</name>
    </ligand>
</feature>
<feature type="binding site" evidence="1">
    <location>
        <position position="78"/>
    </location>
    <ligand>
        <name>substrate</name>
    </ligand>
</feature>
<feature type="binding site" evidence="1">
    <location>
        <begin position="82"/>
        <end position="84"/>
    </location>
    <ligand>
        <name>substrate</name>
    </ligand>
</feature>
<feature type="binding site" evidence="1">
    <location>
        <position position="92"/>
    </location>
    <ligand>
        <name>substrate</name>
    </ligand>
</feature>
<keyword id="KW-0378">Hydrolase</keyword>
<keyword id="KW-0460">Magnesium</keyword>
<keyword id="KW-0479">Metal-binding</keyword>
<keyword id="KW-0546">Nucleotide metabolism</keyword>
<keyword id="KW-1185">Reference proteome</keyword>